<protein>
    <recommendedName>
        <fullName evidence="1">Photosystem II reaction center protein M</fullName>
        <shortName evidence="1">PSII-M</shortName>
    </recommendedName>
</protein>
<reference key="1">
    <citation type="submission" date="2007-03" db="EMBL/GenBank/DDBJ databases">
        <title>Sequencing analysis of Nasturtium officinale chloroplast DNA.</title>
        <authorList>
            <person name="Hosouchi T."/>
            <person name="Tsuruoka H."/>
            <person name="Kotani H."/>
        </authorList>
    </citation>
    <scope>NUCLEOTIDE SEQUENCE [LARGE SCALE GENOMIC DNA]</scope>
</reference>
<name>PSBM_NASOF</name>
<dbReference type="EMBL" id="AP009376">
    <property type="protein sequence ID" value="BAF50632.1"/>
    <property type="molecule type" value="Genomic_DNA"/>
</dbReference>
<dbReference type="RefSeq" id="YP_001123808.1">
    <property type="nucleotide sequence ID" value="NC_009275.1"/>
</dbReference>
<dbReference type="SMR" id="A4QLS7"/>
<dbReference type="GeneID" id="4962206"/>
<dbReference type="GO" id="GO:0009535">
    <property type="term" value="C:chloroplast thylakoid membrane"/>
    <property type="evidence" value="ECO:0007669"/>
    <property type="project" value="UniProtKB-SubCell"/>
</dbReference>
<dbReference type="GO" id="GO:0009523">
    <property type="term" value="C:photosystem II"/>
    <property type="evidence" value="ECO:0007669"/>
    <property type="project" value="UniProtKB-KW"/>
</dbReference>
<dbReference type="GO" id="GO:0019684">
    <property type="term" value="P:photosynthesis, light reaction"/>
    <property type="evidence" value="ECO:0007669"/>
    <property type="project" value="InterPro"/>
</dbReference>
<dbReference type="HAMAP" id="MF_00438">
    <property type="entry name" value="PSII_PsbM"/>
    <property type="match status" value="1"/>
</dbReference>
<dbReference type="InterPro" id="IPR007826">
    <property type="entry name" value="PSII_PsbM"/>
</dbReference>
<dbReference type="InterPro" id="IPR037269">
    <property type="entry name" value="PSII_PsbM_sf"/>
</dbReference>
<dbReference type="NCBIfam" id="TIGR03038">
    <property type="entry name" value="PS_II_psbM"/>
    <property type="match status" value="1"/>
</dbReference>
<dbReference type="PANTHER" id="PTHR35774">
    <property type="entry name" value="PHOTOSYSTEM II REACTION CENTER PROTEIN M"/>
    <property type="match status" value="1"/>
</dbReference>
<dbReference type="PANTHER" id="PTHR35774:SF1">
    <property type="entry name" value="PHOTOSYSTEM II REACTION CENTER PROTEIN M"/>
    <property type="match status" value="1"/>
</dbReference>
<dbReference type="Pfam" id="PF05151">
    <property type="entry name" value="PsbM"/>
    <property type="match status" value="1"/>
</dbReference>
<dbReference type="SUPFAM" id="SSF161033">
    <property type="entry name" value="Photosystem II reaction center protein M, PsbM"/>
    <property type="match status" value="1"/>
</dbReference>
<comment type="function">
    <text evidence="1">One of the components of the core complex of photosystem II (PSII). PSII is a light-driven water:plastoquinone oxidoreductase that uses light energy to abstract electrons from H(2)O, generating O(2) and a proton gradient subsequently used for ATP formation. It consists of a core antenna complex that captures photons, and an electron transfer chain that converts photonic excitation into a charge separation. This subunit is found at the monomer-monomer interface.</text>
</comment>
<comment type="subunit">
    <text evidence="1">PSII is composed of 1 copy each of membrane proteins PsbA, PsbB, PsbC, PsbD, PsbE, PsbF, PsbH, PsbI, PsbJ, PsbK, PsbL, PsbM, PsbT, PsbX, PsbY, PsbZ, Psb30/Ycf12, at least 3 peripheral proteins of the oxygen-evolving complex and a large number of cofactors. It forms dimeric complexes.</text>
</comment>
<comment type="subcellular location">
    <subcellularLocation>
        <location evidence="1">Plastid</location>
        <location evidence="1">Chloroplast thylakoid membrane</location>
        <topology evidence="1">Single-pass membrane protein</topology>
    </subcellularLocation>
</comment>
<comment type="similarity">
    <text evidence="1">Belongs to the PsbM family.</text>
</comment>
<evidence type="ECO:0000255" key="1">
    <source>
        <dbReference type="HAMAP-Rule" id="MF_00438"/>
    </source>
</evidence>
<organism>
    <name type="scientific">Nasturtium officinale</name>
    <name type="common">Watercress</name>
    <name type="synonym">Rorippa nasturtium-aquaticum</name>
    <dbReference type="NCBI Taxonomy" id="65948"/>
    <lineage>
        <taxon>Eukaryota</taxon>
        <taxon>Viridiplantae</taxon>
        <taxon>Streptophyta</taxon>
        <taxon>Embryophyta</taxon>
        <taxon>Tracheophyta</taxon>
        <taxon>Spermatophyta</taxon>
        <taxon>Magnoliopsida</taxon>
        <taxon>eudicotyledons</taxon>
        <taxon>Gunneridae</taxon>
        <taxon>Pentapetalae</taxon>
        <taxon>rosids</taxon>
        <taxon>malvids</taxon>
        <taxon>Brassicales</taxon>
        <taxon>Brassicaceae</taxon>
        <taxon>Cardamineae</taxon>
        <taxon>Nasturtium</taxon>
    </lineage>
</organism>
<gene>
    <name evidence="1" type="primary">psbM</name>
</gene>
<proteinExistence type="inferred from homology"/>
<feature type="chain" id="PRO_0000325744" description="Photosystem II reaction center protein M">
    <location>
        <begin position="1"/>
        <end position="34"/>
    </location>
</feature>
<feature type="transmembrane region" description="Helical" evidence="1">
    <location>
        <begin position="5"/>
        <end position="25"/>
    </location>
</feature>
<geneLocation type="chloroplast"/>
<keyword id="KW-0150">Chloroplast</keyword>
<keyword id="KW-0472">Membrane</keyword>
<keyword id="KW-0602">Photosynthesis</keyword>
<keyword id="KW-0604">Photosystem II</keyword>
<keyword id="KW-0934">Plastid</keyword>
<keyword id="KW-0674">Reaction center</keyword>
<keyword id="KW-0793">Thylakoid</keyword>
<keyword id="KW-0812">Transmembrane</keyword>
<keyword id="KW-1133">Transmembrane helix</keyword>
<sequence length="34" mass="3783">MEVNILAFIATALFILVPTAFLLIIYVKTVSQND</sequence>
<accession>A4QLS7</accession>